<keyword id="KW-1267">Proteomics identification</keyword>
<keyword id="KW-1185">Reference proteome</keyword>
<feature type="chain" id="PRO_0000252329" description="TPT1-like protein">
    <location>
        <begin position="1"/>
        <end position="140"/>
    </location>
</feature>
<feature type="domain" description="TCTP" evidence="1">
    <location>
        <begin position="6"/>
        <end position="140"/>
    </location>
</feature>
<feature type="sequence conflict" description="In Ref. 1; AAS76644." evidence="2" ref="1">
    <original>T</original>
    <variation>I</variation>
    <location>
        <position position="8"/>
    </location>
</feature>
<organism>
    <name type="scientific">Homo sapiens</name>
    <name type="common">Human</name>
    <dbReference type="NCBI Taxonomy" id="9606"/>
    <lineage>
        <taxon>Eukaryota</taxon>
        <taxon>Metazoa</taxon>
        <taxon>Chordata</taxon>
        <taxon>Craniata</taxon>
        <taxon>Vertebrata</taxon>
        <taxon>Euteleostomi</taxon>
        <taxon>Mammalia</taxon>
        <taxon>Eutheria</taxon>
        <taxon>Euarchontoglires</taxon>
        <taxon>Primates</taxon>
        <taxon>Haplorrhini</taxon>
        <taxon>Catarrhini</taxon>
        <taxon>Hominidae</taxon>
        <taxon>Homo</taxon>
    </lineage>
</organism>
<name>TPT1L_HUMAN</name>
<evidence type="ECO:0000255" key="1">
    <source>
        <dbReference type="PROSITE-ProRule" id="PRU01133"/>
    </source>
</evidence>
<evidence type="ECO:0000305" key="2"/>
<dbReference type="EMBL" id="AY572224">
    <property type="protein sequence ID" value="AAS76644.1"/>
    <property type="molecule type" value="mRNA"/>
</dbReference>
<dbReference type="EMBL" id="AK126598">
    <property type="protein sequence ID" value="BAC86606.1"/>
    <property type="molecule type" value="mRNA"/>
</dbReference>
<dbReference type="EMBL" id="BC137552">
    <property type="protein sequence ID" value="AAI37553.1"/>
    <property type="molecule type" value="mRNA"/>
</dbReference>
<dbReference type="EMBL" id="BC137564">
    <property type="protein sequence ID" value="AAI37565.1"/>
    <property type="molecule type" value="mRNA"/>
</dbReference>
<dbReference type="RefSeq" id="NP_997305.2">
    <property type="nucleotide sequence ID" value="NM_207422.2"/>
</dbReference>
<dbReference type="SMR" id="Q56UQ5"/>
<dbReference type="BioGRID" id="134241">
    <property type="interactions" value="8"/>
</dbReference>
<dbReference type="FunCoup" id="Q56UQ5">
    <property type="interactions" value="380"/>
</dbReference>
<dbReference type="IntAct" id="Q56UQ5">
    <property type="interactions" value="1"/>
</dbReference>
<dbReference type="iPTMnet" id="Q56UQ5"/>
<dbReference type="PhosphoSitePlus" id="Q56UQ5"/>
<dbReference type="BioMuta" id="-"/>
<dbReference type="DMDM" id="391358162"/>
<dbReference type="jPOST" id="Q56UQ5"/>
<dbReference type="MassIVE" id="Q56UQ5"/>
<dbReference type="DNASU" id="392490"/>
<dbReference type="AGR" id="HGNC:33737"/>
<dbReference type="DisGeNET" id="340527"/>
<dbReference type="neXtProt" id="NX_Q56UQ5"/>
<dbReference type="InParanoid" id="Q56UQ5"/>
<dbReference type="PAN-GO" id="Q56UQ5">
    <property type="GO annotations" value="2 GO annotations based on evolutionary models"/>
</dbReference>
<dbReference type="PathwayCommons" id="Q56UQ5"/>
<dbReference type="BioGRID-ORCS" id="392490">
    <property type="hits" value="10 hits in 233 CRISPR screens"/>
</dbReference>
<dbReference type="GenomeRNAi" id="392490"/>
<dbReference type="Pharos" id="Q56UQ5">
    <property type="development level" value="Tdark"/>
</dbReference>
<dbReference type="PRO" id="PR:Q56UQ5"/>
<dbReference type="Proteomes" id="UP000005640">
    <property type="component" value="Unplaced"/>
</dbReference>
<dbReference type="RNAct" id="Q56UQ5">
    <property type="molecule type" value="protein"/>
</dbReference>
<dbReference type="GO" id="GO:0005737">
    <property type="term" value="C:cytoplasm"/>
    <property type="evidence" value="ECO:0000318"/>
    <property type="project" value="GO_Central"/>
</dbReference>
<dbReference type="GO" id="GO:0005509">
    <property type="term" value="F:calcium ion binding"/>
    <property type="evidence" value="ECO:0000318"/>
    <property type="project" value="GO_Central"/>
</dbReference>
<dbReference type="Gene3D" id="2.170.150.10">
    <property type="entry name" value="Metal Binding Protein, Guanine Nucleotide Exchange Factor, Chain A"/>
    <property type="match status" value="1"/>
</dbReference>
<dbReference type="InterPro" id="IPR011057">
    <property type="entry name" value="Mss4-like_sf"/>
</dbReference>
<dbReference type="InterPro" id="IPR011323">
    <property type="entry name" value="Mss4/transl-control_tumour"/>
</dbReference>
<dbReference type="InterPro" id="IPR034737">
    <property type="entry name" value="TCTP"/>
</dbReference>
<dbReference type="InterPro" id="IPR018103">
    <property type="entry name" value="Translation_control_tumour_CS"/>
</dbReference>
<dbReference type="InterPro" id="IPR018105">
    <property type="entry name" value="Translational_control_tumour_p"/>
</dbReference>
<dbReference type="PANTHER" id="PTHR11991:SF9">
    <property type="entry name" value="TPT1-LIKE PROTEIN-RELATED"/>
    <property type="match status" value="1"/>
</dbReference>
<dbReference type="PANTHER" id="PTHR11991">
    <property type="entry name" value="TRANSLATIONALLY CONTROLLED TUMOR PROTEIN-RELATED"/>
    <property type="match status" value="1"/>
</dbReference>
<dbReference type="Pfam" id="PF00838">
    <property type="entry name" value="TCTP"/>
    <property type="match status" value="1"/>
</dbReference>
<dbReference type="PRINTS" id="PR01653">
    <property type="entry name" value="TCTPROTEIN"/>
</dbReference>
<dbReference type="SUPFAM" id="SSF51316">
    <property type="entry name" value="Mss4-like"/>
    <property type="match status" value="1"/>
</dbReference>
<dbReference type="PROSITE" id="PS01002">
    <property type="entry name" value="TCTP_1"/>
    <property type="match status" value="1"/>
</dbReference>
<dbReference type="PROSITE" id="PS51797">
    <property type="entry name" value="TCTP_3"/>
    <property type="match status" value="1"/>
</dbReference>
<protein>
    <recommendedName>
        <fullName>TPT1-like protein</fullName>
    </recommendedName>
</protein>
<comment type="similarity">
    <text evidence="1">Belongs to the TCTP family.</text>
</comment>
<proteinExistence type="evidence at protein level"/>
<reference key="1">
    <citation type="submission" date="2004-03" db="EMBL/GenBank/DDBJ databases">
        <authorList>
            <person name="Chen S."/>
            <person name="Guo J.H."/>
            <person name="Yu L."/>
        </authorList>
    </citation>
    <scope>NUCLEOTIDE SEQUENCE [MRNA]</scope>
</reference>
<reference key="2">
    <citation type="journal article" date="2004" name="Nat. Genet.">
        <title>Complete sequencing and characterization of 21,243 full-length human cDNAs.</title>
        <authorList>
            <person name="Ota T."/>
            <person name="Suzuki Y."/>
            <person name="Nishikawa T."/>
            <person name="Otsuki T."/>
            <person name="Sugiyama T."/>
            <person name="Irie R."/>
            <person name="Wakamatsu A."/>
            <person name="Hayashi K."/>
            <person name="Sato H."/>
            <person name="Nagai K."/>
            <person name="Kimura K."/>
            <person name="Makita H."/>
            <person name="Sekine M."/>
            <person name="Obayashi M."/>
            <person name="Nishi T."/>
            <person name="Shibahara T."/>
            <person name="Tanaka T."/>
            <person name="Ishii S."/>
            <person name="Yamamoto J."/>
            <person name="Saito K."/>
            <person name="Kawai Y."/>
            <person name="Isono Y."/>
            <person name="Nakamura Y."/>
            <person name="Nagahari K."/>
            <person name="Murakami K."/>
            <person name="Yasuda T."/>
            <person name="Iwayanagi T."/>
            <person name="Wagatsuma M."/>
            <person name="Shiratori A."/>
            <person name="Sudo H."/>
            <person name="Hosoiri T."/>
            <person name="Kaku Y."/>
            <person name="Kodaira H."/>
            <person name="Kondo H."/>
            <person name="Sugawara M."/>
            <person name="Takahashi M."/>
            <person name="Kanda K."/>
            <person name="Yokoi T."/>
            <person name="Furuya T."/>
            <person name="Kikkawa E."/>
            <person name="Omura Y."/>
            <person name="Abe K."/>
            <person name="Kamihara K."/>
            <person name="Katsuta N."/>
            <person name="Sato K."/>
            <person name="Tanikawa M."/>
            <person name="Yamazaki M."/>
            <person name="Ninomiya K."/>
            <person name="Ishibashi T."/>
            <person name="Yamashita H."/>
            <person name="Murakawa K."/>
            <person name="Fujimori K."/>
            <person name="Tanai H."/>
            <person name="Kimata M."/>
            <person name="Watanabe M."/>
            <person name="Hiraoka S."/>
            <person name="Chiba Y."/>
            <person name="Ishida S."/>
            <person name="Ono Y."/>
            <person name="Takiguchi S."/>
            <person name="Watanabe S."/>
            <person name="Yosida M."/>
            <person name="Hotuta T."/>
            <person name="Kusano J."/>
            <person name="Kanehori K."/>
            <person name="Takahashi-Fujii A."/>
            <person name="Hara H."/>
            <person name="Tanase T.-O."/>
            <person name="Nomura Y."/>
            <person name="Togiya S."/>
            <person name="Komai F."/>
            <person name="Hara R."/>
            <person name="Takeuchi K."/>
            <person name="Arita M."/>
            <person name="Imose N."/>
            <person name="Musashino K."/>
            <person name="Yuuki H."/>
            <person name="Oshima A."/>
            <person name="Sasaki N."/>
            <person name="Aotsuka S."/>
            <person name="Yoshikawa Y."/>
            <person name="Matsunawa H."/>
            <person name="Ichihara T."/>
            <person name="Shiohata N."/>
            <person name="Sano S."/>
            <person name="Moriya S."/>
            <person name="Momiyama H."/>
            <person name="Satoh N."/>
            <person name="Takami S."/>
            <person name="Terashima Y."/>
            <person name="Suzuki O."/>
            <person name="Nakagawa S."/>
            <person name="Senoh A."/>
            <person name="Mizoguchi H."/>
            <person name="Goto Y."/>
            <person name="Shimizu F."/>
            <person name="Wakebe H."/>
            <person name="Hishigaki H."/>
            <person name="Watanabe T."/>
            <person name="Sugiyama A."/>
            <person name="Takemoto M."/>
            <person name="Kawakami B."/>
            <person name="Yamazaki M."/>
            <person name="Watanabe K."/>
            <person name="Kumagai A."/>
            <person name="Itakura S."/>
            <person name="Fukuzumi Y."/>
            <person name="Fujimori Y."/>
            <person name="Komiyama M."/>
            <person name="Tashiro H."/>
            <person name="Tanigami A."/>
            <person name="Fujiwara T."/>
            <person name="Ono T."/>
            <person name="Yamada K."/>
            <person name="Fujii Y."/>
            <person name="Ozaki K."/>
            <person name="Hirao M."/>
            <person name="Ohmori Y."/>
            <person name="Kawabata A."/>
            <person name="Hikiji T."/>
            <person name="Kobatake N."/>
            <person name="Inagaki H."/>
            <person name="Ikema Y."/>
            <person name="Okamoto S."/>
            <person name="Okitani R."/>
            <person name="Kawakami T."/>
            <person name="Noguchi S."/>
            <person name="Itoh T."/>
            <person name="Shigeta K."/>
            <person name="Senba T."/>
            <person name="Matsumura K."/>
            <person name="Nakajima Y."/>
            <person name="Mizuno T."/>
            <person name="Morinaga M."/>
            <person name="Sasaki M."/>
            <person name="Togashi T."/>
            <person name="Oyama M."/>
            <person name="Hata H."/>
            <person name="Watanabe M."/>
            <person name="Komatsu T."/>
            <person name="Mizushima-Sugano J."/>
            <person name="Satoh T."/>
            <person name="Shirai Y."/>
            <person name="Takahashi Y."/>
            <person name="Nakagawa K."/>
            <person name="Okumura K."/>
            <person name="Nagase T."/>
            <person name="Nomura N."/>
            <person name="Kikuchi H."/>
            <person name="Masuho Y."/>
            <person name="Yamashita R."/>
            <person name="Nakai K."/>
            <person name="Yada T."/>
            <person name="Nakamura Y."/>
            <person name="Ohara O."/>
            <person name="Isogai T."/>
            <person name="Sugano S."/>
        </authorList>
    </citation>
    <scope>NUCLEOTIDE SEQUENCE [LARGE SCALE MRNA]</scope>
    <source>
        <tissue>Cerebellum</tissue>
    </source>
</reference>
<reference key="3">
    <citation type="journal article" date="2004" name="Genome Res.">
        <title>The status, quality, and expansion of the NIH full-length cDNA project: the Mammalian Gene Collection (MGC).</title>
        <authorList>
            <consortium name="The MGC Project Team"/>
        </authorList>
    </citation>
    <scope>NUCLEOTIDE SEQUENCE [LARGE SCALE MRNA]</scope>
    <source>
        <tissue>Testis</tissue>
    </source>
</reference>
<accession>Q56UQ5</accession>
<accession>B2RPQ9</accession>
<accession>Q6ZTI1</accession>
<sequence>METVIMITYWDLISHSEMFSDSYMSQEIADGLRLEVEGKIVSRTEGNIFDSLIGGNASAEGPEGKGTESTVITGVDSVMNHHLQETSFTKEAYNKCIKDYMKSIKGKLEEQRPKRVKPFMTGAAEQIKHILANFKNYQKT</sequence>